<gene>
    <name type="primary">SKI</name>
</gene>
<sequence>MEAAAGGRGGFQPHPGLQKTLEQFHLSSMSSLGGPAAFSARWAQEAYKKESAKEAGAAAVPAPVPAAAEPPPVLHLPAIQPPPPVLPGPFFMPSDRSTERCETVLEGETISCFVVGGEKRLCLPQILNSVLRDFSLQQINSVCDELHTYCSRCTADQLEILKVMGILPFSAPSCGLITKTDAERLCNALLYGGAYPPPCKKELAASLALGLELSERSVRVYHECFGKCKGLLVPELYSSPSAACIQCLDCRLMYPPHKFVVHSHKALENRTCHWGFDSANWRAYILLSQDYTGKEEQTRLGRCLDDVKEKFDYGNKYKRRVPRVSSEPPASIRKTDDTPSQHPTSSEKDKQSGWLRTLASPSSKSLGCVHPRQRLSAFRPWSPAVSTSDKELPPHLPALIRDSFYSYKSFETGVAPNVALAPPAQQKVVSSPPCATVVSRAPEPLATCVQPRKRKLAVDTPGAPETPVPVAAPEDDKDSEAEVEVESREEFTSSLSSLSSPSFTSSSSAKDLSSPGVHVPPVAPAAADAAAPADTPSSGLEAELEHLRQALEGGLDTKEAKEKFLHEVVKMRVKQEEKLSAALQAKRSLHQELEFLRVAKKEKLREATEAKRNLRKEIERLRAENEKKMKEANESRLRLKRELEQARQVRVCDKGCEAGRLRAKYSAQIEDLQVKLQHAEADREQLRADLLREREAREHLEKVVKELQEQLWPRPRSEATGGESTAELEP</sequence>
<dbReference type="EMBL" id="AB034731">
    <property type="protein sequence ID" value="BAA86292.1"/>
    <property type="molecule type" value="mRNA"/>
</dbReference>
<dbReference type="RefSeq" id="NP_001075287.1">
    <property type="nucleotide sequence ID" value="NM_001081818.1"/>
</dbReference>
<dbReference type="SMR" id="Q9TUG2"/>
<dbReference type="FunCoup" id="Q9TUG2">
    <property type="interactions" value="1236"/>
</dbReference>
<dbReference type="STRING" id="9796.ENSECAP00000048345"/>
<dbReference type="PaxDb" id="9796-ENSECAP00000048345"/>
<dbReference type="GeneID" id="100033833"/>
<dbReference type="KEGG" id="ecb:100033833"/>
<dbReference type="CTD" id="6497"/>
<dbReference type="InParanoid" id="Q9TUG2"/>
<dbReference type="OrthoDB" id="3938623at2759"/>
<dbReference type="Proteomes" id="UP000002281">
    <property type="component" value="Unplaced"/>
</dbReference>
<dbReference type="GO" id="GO:0005737">
    <property type="term" value="C:cytoplasm"/>
    <property type="evidence" value="ECO:0000318"/>
    <property type="project" value="GO_Central"/>
</dbReference>
<dbReference type="GO" id="GO:0005634">
    <property type="term" value="C:nucleus"/>
    <property type="evidence" value="ECO:0000250"/>
    <property type="project" value="UniProtKB"/>
</dbReference>
<dbReference type="GO" id="GO:0005667">
    <property type="term" value="C:transcription regulator complex"/>
    <property type="evidence" value="ECO:0000318"/>
    <property type="project" value="GO_Central"/>
</dbReference>
<dbReference type="GO" id="GO:0000981">
    <property type="term" value="F:DNA-binding transcription factor activity, RNA polymerase II-specific"/>
    <property type="evidence" value="ECO:0000318"/>
    <property type="project" value="GO_Central"/>
</dbReference>
<dbReference type="GO" id="GO:0001227">
    <property type="term" value="F:DNA-binding transcription repressor activity, RNA polymerase II-specific"/>
    <property type="evidence" value="ECO:0000250"/>
    <property type="project" value="UniProtKB"/>
</dbReference>
<dbReference type="GO" id="GO:0019901">
    <property type="term" value="F:protein kinase binding"/>
    <property type="evidence" value="ECO:0000250"/>
    <property type="project" value="UniProtKB"/>
</dbReference>
<dbReference type="GO" id="GO:0000978">
    <property type="term" value="F:RNA polymerase II cis-regulatory region sequence-specific DNA binding"/>
    <property type="evidence" value="ECO:0000318"/>
    <property type="project" value="GO_Central"/>
</dbReference>
<dbReference type="GO" id="GO:0046332">
    <property type="term" value="F:SMAD binding"/>
    <property type="evidence" value="ECO:0000250"/>
    <property type="project" value="UniProtKB"/>
</dbReference>
<dbReference type="GO" id="GO:0031625">
    <property type="term" value="F:ubiquitin protein ligase binding"/>
    <property type="evidence" value="ECO:0000250"/>
    <property type="project" value="UniProtKB"/>
</dbReference>
<dbReference type="GO" id="GO:0008270">
    <property type="term" value="F:zinc ion binding"/>
    <property type="evidence" value="ECO:0000250"/>
    <property type="project" value="UniProtKB"/>
</dbReference>
<dbReference type="GO" id="GO:0032926">
    <property type="term" value="P:negative regulation of activin receptor signaling pathway"/>
    <property type="evidence" value="ECO:0000250"/>
    <property type="project" value="UniProtKB"/>
</dbReference>
<dbReference type="GO" id="GO:0030514">
    <property type="term" value="P:negative regulation of BMP signaling pathway"/>
    <property type="evidence" value="ECO:0000250"/>
    <property type="project" value="UniProtKB"/>
</dbReference>
<dbReference type="GO" id="GO:0008285">
    <property type="term" value="P:negative regulation of cell population proliferation"/>
    <property type="evidence" value="ECO:0000250"/>
    <property type="project" value="UniProtKB"/>
</dbReference>
<dbReference type="GO" id="GO:0045668">
    <property type="term" value="P:negative regulation of osteoblast differentiation"/>
    <property type="evidence" value="ECO:0000250"/>
    <property type="project" value="UniProtKB"/>
</dbReference>
<dbReference type="GO" id="GO:0060392">
    <property type="term" value="P:negative regulation of SMAD protein signal transduction"/>
    <property type="evidence" value="ECO:0000250"/>
    <property type="project" value="UniProtKB"/>
</dbReference>
<dbReference type="GO" id="GO:0000122">
    <property type="term" value="P:negative regulation of transcription by RNA polymerase II"/>
    <property type="evidence" value="ECO:0000250"/>
    <property type="project" value="UniProtKB"/>
</dbReference>
<dbReference type="GO" id="GO:0030512">
    <property type="term" value="P:negative regulation of transforming growth factor beta receptor signaling pathway"/>
    <property type="evidence" value="ECO:0000250"/>
    <property type="project" value="UniProtKB"/>
</dbReference>
<dbReference type="GO" id="GO:0043388">
    <property type="term" value="P:positive regulation of DNA binding"/>
    <property type="evidence" value="ECO:0000250"/>
    <property type="project" value="UniProtKB"/>
</dbReference>
<dbReference type="CDD" id="cd21083">
    <property type="entry name" value="DHD_Ski"/>
    <property type="match status" value="1"/>
</dbReference>
<dbReference type="FunFam" id="3.10.390.10:FF:000002">
    <property type="entry name" value="Putative ski oncogene"/>
    <property type="match status" value="1"/>
</dbReference>
<dbReference type="FunFam" id="3.10.260.20:FF:000002">
    <property type="entry name" value="SKI-like oncogene a"/>
    <property type="match status" value="1"/>
</dbReference>
<dbReference type="Gene3D" id="3.10.390.10">
    <property type="entry name" value="SAND domain-like"/>
    <property type="match status" value="1"/>
</dbReference>
<dbReference type="Gene3D" id="3.10.260.20">
    <property type="entry name" value="Ski"/>
    <property type="match status" value="1"/>
</dbReference>
<dbReference type="InterPro" id="IPR014890">
    <property type="entry name" value="c-SKI_SMAD4-bd_dom"/>
</dbReference>
<dbReference type="InterPro" id="IPR047315">
    <property type="entry name" value="DHD_Ski"/>
</dbReference>
<dbReference type="InterPro" id="IPR009061">
    <property type="entry name" value="DNA-bd_dom_put_sf"/>
</dbReference>
<dbReference type="InterPro" id="IPR010919">
    <property type="entry name" value="SAND-like_dom_sf"/>
</dbReference>
<dbReference type="InterPro" id="IPR003380">
    <property type="entry name" value="SKI/SNO/DAC"/>
</dbReference>
<dbReference type="InterPro" id="IPR037000">
    <property type="entry name" value="Ski_DNA-bd_sf"/>
</dbReference>
<dbReference type="InterPro" id="IPR023216">
    <property type="entry name" value="Tscrpt_reg_SKI_SnoN"/>
</dbReference>
<dbReference type="PANTHER" id="PTHR10005:SF15">
    <property type="entry name" value="SKI ONCOGENE"/>
    <property type="match status" value="1"/>
</dbReference>
<dbReference type="PANTHER" id="PTHR10005">
    <property type="entry name" value="SKI ONCOGENE-RELATED"/>
    <property type="match status" value="1"/>
</dbReference>
<dbReference type="Pfam" id="PF08782">
    <property type="entry name" value="c-SKI_SMAD_bind"/>
    <property type="match status" value="1"/>
</dbReference>
<dbReference type="Pfam" id="PF02437">
    <property type="entry name" value="Ski_Sno_DHD"/>
    <property type="match status" value="1"/>
</dbReference>
<dbReference type="SMART" id="SM01046">
    <property type="entry name" value="c-SKI_SMAD_bind"/>
    <property type="match status" value="1"/>
</dbReference>
<dbReference type="SUPFAM" id="SSF46955">
    <property type="entry name" value="Putative DNA-binding domain"/>
    <property type="match status" value="1"/>
</dbReference>
<dbReference type="SUPFAM" id="SSF63763">
    <property type="entry name" value="SAND domain-like"/>
    <property type="match status" value="1"/>
</dbReference>
<comment type="function">
    <text evidence="1">May play a role in terminal differentiation of skeletal muscle cells but not in the determination of cells to the myogenic lineage. Functions as a repressor of TGF-beta signaling (By similarity).</text>
</comment>
<comment type="subunit">
    <text evidence="1">Interacts with SMAD2, SMAD3 and SMAD4. Interacts with HIPK2. Part of a complex with HIPK2 and SMAD1/2/3. Interacts with PRDM16 and SMAD3; the interaction with PRDM16 promotes the recruitment SMAD3-HDAC1 complex on the promoter of TGF-beta target genes (By similarity).</text>
</comment>
<comment type="subcellular location">
    <subcellularLocation>
        <location evidence="1">Nucleus</location>
    </subcellularLocation>
</comment>
<comment type="PTM">
    <text evidence="3">Ubiquitinated by ARK2C, promoting proteasomal degradation, leading to enhance the BMP-Smad signaling.</text>
</comment>
<comment type="similarity">
    <text evidence="6">Belongs to the SKI family.</text>
</comment>
<proteinExistence type="evidence at transcript level"/>
<accession>Q9TUG2</accession>
<keyword id="KW-0175">Coiled coil</keyword>
<keyword id="KW-0539">Nucleus</keyword>
<keyword id="KW-0597">Phosphoprotein</keyword>
<keyword id="KW-0656">Proto-oncogene</keyword>
<keyword id="KW-1185">Reference proteome</keyword>
<keyword id="KW-0677">Repeat</keyword>
<keyword id="KW-0832">Ubl conjugation</keyword>
<evidence type="ECO:0000250" key="1"/>
<evidence type="ECO:0000250" key="2">
    <source>
        <dbReference type="UniProtKB" id="P12755"/>
    </source>
</evidence>
<evidence type="ECO:0000250" key="3">
    <source>
        <dbReference type="UniProtKB" id="Q60698"/>
    </source>
</evidence>
<evidence type="ECO:0000255" key="4"/>
<evidence type="ECO:0000256" key="5">
    <source>
        <dbReference type="SAM" id="MobiDB-lite"/>
    </source>
</evidence>
<evidence type="ECO:0000305" key="6"/>
<organism>
    <name type="scientific">Equus caballus</name>
    <name type="common">Horse</name>
    <dbReference type="NCBI Taxonomy" id="9796"/>
    <lineage>
        <taxon>Eukaryota</taxon>
        <taxon>Metazoa</taxon>
        <taxon>Chordata</taxon>
        <taxon>Craniata</taxon>
        <taxon>Vertebrata</taxon>
        <taxon>Euteleostomi</taxon>
        <taxon>Mammalia</taxon>
        <taxon>Eutheria</taxon>
        <taxon>Laurasiatheria</taxon>
        <taxon>Perissodactyla</taxon>
        <taxon>Equidae</taxon>
        <taxon>Equus</taxon>
    </lineage>
</organism>
<protein>
    <recommendedName>
        <fullName>Ski oncogene</fullName>
    </recommendedName>
    <alternativeName>
        <fullName>Proto-oncogene c-Ski</fullName>
    </alternativeName>
</protein>
<reference key="1">
    <citation type="submission" date="1999-11" db="EMBL/GenBank/DDBJ databases">
        <title>Equine c-ski cDNA sequence.</title>
        <authorList>
            <person name="Yamanouchi K."/>
            <person name="Suzuki S."/>
            <person name="Tojo H."/>
        </authorList>
    </citation>
    <scope>NUCLEOTIDE SEQUENCE [MRNA]</scope>
    <source>
        <tissue>Cerebellum</tissue>
    </source>
</reference>
<name>SKI_HORSE</name>
<feature type="chain" id="PRO_0000129381" description="Ski oncogene">
    <location>
        <begin position="1"/>
        <end position="730"/>
    </location>
</feature>
<feature type="region of interest" description="Disordered" evidence="5">
    <location>
        <begin position="321"/>
        <end position="356"/>
    </location>
</feature>
<feature type="region of interest" description="Disordered" evidence="5">
    <location>
        <begin position="452"/>
        <end position="538"/>
    </location>
</feature>
<feature type="region of interest" description="Disordered" evidence="5">
    <location>
        <begin position="708"/>
        <end position="730"/>
    </location>
</feature>
<feature type="coiled-coil region" evidence="4">
    <location>
        <begin position="539"/>
        <end position="712"/>
    </location>
</feature>
<feature type="compositionally biased region" description="Basic and acidic residues" evidence="5">
    <location>
        <begin position="333"/>
        <end position="351"/>
    </location>
</feature>
<feature type="compositionally biased region" description="Low complexity" evidence="5">
    <location>
        <begin position="460"/>
        <end position="472"/>
    </location>
</feature>
<feature type="compositionally biased region" description="Acidic residues" evidence="5">
    <location>
        <begin position="473"/>
        <end position="484"/>
    </location>
</feature>
<feature type="compositionally biased region" description="Low complexity" evidence="5">
    <location>
        <begin position="492"/>
        <end position="508"/>
    </location>
</feature>
<feature type="compositionally biased region" description="Low complexity" evidence="5">
    <location>
        <begin position="524"/>
        <end position="534"/>
    </location>
</feature>
<feature type="modified residue" description="Phosphoserine" evidence="2">
    <location>
        <position position="382"/>
    </location>
</feature>
<feature type="modified residue" description="Phosphoserine" evidence="2">
    <location>
        <position position="431"/>
    </location>
</feature>
<feature type="modified residue" description="Phosphoserine" evidence="2">
    <location>
        <position position="479"/>
    </location>
</feature>